<comment type="function">
    <text evidence="2 8">Required for formation of the rec12-mediated double-strand breaks (DSBs) that initiate meiotic recombination (PubMed:10882124). May be involved primarily in the early steps of meiotic recombination (Probable).</text>
</comment>
<comment type="subunit">
    <text evidence="3">Component of the DSB catalytic core (DSBC) complex, composed of at least rec12, rec6 and rec14. The complex interacts with mde2.</text>
</comment>
<comment type="developmental stage">
    <text evidence="4">Most abundant at 2 hours after induction of meiosis, at the time of premeiotic DNA synthesis. Found at much lower levels before and after this time.</text>
</comment>
<comment type="miscellaneous">
    <text evidence="7">Despite weak sequence similarities, may correspond to the subunit B of a rec12-containing topoisomerase 6 complex specifically required for meiotic recombination. Retains some of the structural features of the ancestral archaeal Top6B subunit (AC O05207).</text>
</comment>
<comment type="similarity">
    <text evidence="6">Belongs to the TOP6B-like family.</text>
</comment>
<comment type="sequence caution" evidence="6">
    <conflict type="erroneous gene model prediction">
        <sequence resource="EMBL-CDS" id="AAA53084"/>
    </conflict>
</comment>
<comment type="sequence caution" evidence="6">
    <conflict type="erroneous gene model prediction">
        <sequence resource="EMBL-CDS" id="CAB57918"/>
    </conflict>
</comment>
<organism>
    <name type="scientific">Schizosaccharomyces pombe (strain 972 / ATCC 24843)</name>
    <name type="common">Fission yeast</name>
    <dbReference type="NCBI Taxonomy" id="284812"/>
    <lineage>
        <taxon>Eukaryota</taxon>
        <taxon>Fungi</taxon>
        <taxon>Dikarya</taxon>
        <taxon>Ascomycota</taxon>
        <taxon>Taphrinomycotina</taxon>
        <taxon>Schizosaccharomycetes</taxon>
        <taxon>Schizosaccharomycetales</taxon>
        <taxon>Schizosaccharomycetaceae</taxon>
        <taxon>Schizosaccharomyces</taxon>
    </lineage>
</organism>
<dbReference type="EMBL" id="L14773">
    <property type="protein sequence ID" value="AAA53084.1"/>
    <property type="status" value="ALT_SEQ"/>
    <property type="molecule type" value="Genomic_DNA"/>
</dbReference>
<dbReference type="EMBL" id="CU329671">
    <property type="protein sequence ID" value="CAB57918.1"/>
    <property type="status" value="ALT_SEQ"/>
    <property type="molecule type" value="Genomic_DNA"/>
</dbReference>
<dbReference type="PIR" id="T39915">
    <property type="entry name" value="T39915"/>
</dbReference>
<dbReference type="BioGRID" id="277114">
    <property type="interactions" value="9"/>
</dbReference>
<dbReference type="STRING" id="284812.P40385"/>
<dbReference type="PaxDb" id="4896-SPBC21B10.12.1"/>
<dbReference type="EnsemblFungi" id="SPBC21B10.12.1">
    <property type="protein sequence ID" value="SPBC21B10.12.1:pep"/>
    <property type="gene ID" value="SPBC21B10.12"/>
</dbReference>
<dbReference type="PomBase" id="SPBC21B10.12">
    <property type="gene designation" value="rec6"/>
</dbReference>
<dbReference type="HOGENOM" id="CLU_1422175_0_0_1"/>
<dbReference type="InParanoid" id="P40385"/>
<dbReference type="PRO" id="PR:P40385"/>
<dbReference type="Proteomes" id="UP000002485">
    <property type="component" value="Chromosome II"/>
</dbReference>
<dbReference type="GO" id="GO:0005739">
    <property type="term" value="C:mitochondrion"/>
    <property type="evidence" value="ECO:0007005"/>
    <property type="project" value="PomBase"/>
</dbReference>
<dbReference type="GO" id="GO:0005634">
    <property type="term" value="C:nucleus"/>
    <property type="evidence" value="ECO:0000303"/>
    <property type="project" value="PomBase"/>
</dbReference>
<dbReference type="GO" id="GO:0042138">
    <property type="term" value="P:meiotic DNA double-strand break formation"/>
    <property type="evidence" value="ECO:0000315"/>
    <property type="project" value="PomBase"/>
</dbReference>
<dbReference type="GO" id="GO:0007131">
    <property type="term" value="P:reciprocal meiotic recombination"/>
    <property type="evidence" value="ECO:0000315"/>
    <property type="project" value="PomBase"/>
</dbReference>
<gene>
    <name evidence="5" type="primary">rec6</name>
    <name evidence="9" type="ORF">SPBC21B10.12</name>
</gene>
<accession>P40385</accession>
<accession>Q9USW7</accession>
<feature type="chain" id="PRO_0000097225" description="Meiotic recombination protein rec6">
    <location>
        <begin position="1"/>
        <end position="260"/>
    </location>
</feature>
<feature type="region of interest" description="Disordered" evidence="1">
    <location>
        <begin position="197"/>
        <end position="222"/>
    </location>
</feature>
<feature type="compositionally biased region" description="Low complexity" evidence="1">
    <location>
        <begin position="199"/>
        <end position="213"/>
    </location>
</feature>
<keyword id="KW-0469">Meiosis</keyword>
<keyword id="KW-1185">Reference proteome</keyword>
<name>TO6BL_SCHPO</name>
<sequence>MHRVRSARDGIVLKYHFKEDWDETQNSPIDCIASSRLKFWKRLNFNIYLDPEVSNQNLKLLKTLTLHCDFQSPKKNLTMSKFKAMAVELIHEAFLKHIVSILSKECPLSFQPSYYSKMFNAMSNANIIAGSISRILTRESLDKSFEQSHFQLLMYKKCKLIYTRTLRKNEFDGIHKFPDLEDSKQKLQVADDEENKQYSESSLLDDSQLLCSSPPVDSTEEARTCNVEEDQDEILSVALVTTDTILSSDNFVNDMLSAAD</sequence>
<proteinExistence type="evidence at protein level"/>
<protein>
    <recommendedName>
        <fullName evidence="5">Meiotic recombination protein rec6</fullName>
    </recommendedName>
</protein>
<evidence type="ECO:0000256" key="1">
    <source>
        <dbReference type="SAM" id="MobiDB-lite"/>
    </source>
</evidence>
<evidence type="ECO:0000269" key="2">
    <source>
    </source>
</evidence>
<evidence type="ECO:0000269" key="3">
    <source>
    </source>
</evidence>
<evidence type="ECO:0000269" key="4">
    <source>
    </source>
</evidence>
<evidence type="ECO:0000303" key="5">
    <source>
    </source>
</evidence>
<evidence type="ECO:0000305" key="6"/>
<evidence type="ECO:0000305" key="7">
    <source>
    </source>
</evidence>
<evidence type="ECO:0000305" key="8">
    <source>
    </source>
</evidence>
<evidence type="ECO:0000312" key="9">
    <source>
        <dbReference type="PomBase" id="SPBC21B10.12"/>
    </source>
</evidence>
<reference key="1">
    <citation type="journal article" date="1994" name="Genetics">
        <title>Transient, meiosis-induced expression of the rec6 and rec12 genes of Schizosaccharomyces pombe.</title>
        <authorList>
            <person name="Lin Y."/>
            <person name="Smith G.R."/>
        </authorList>
    </citation>
    <scope>NUCLEOTIDE SEQUENCE [GENOMIC DNA]</scope>
    <scope>FUNCTION</scope>
    <scope>DEVELOPMENTAL STAGE</scope>
</reference>
<reference key="2">
    <citation type="journal article" date="2002" name="Nature">
        <title>The genome sequence of Schizosaccharomyces pombe.</title>
        <authorList>
            <person name="Wood V."/>
            <person name="Gwilliam R."/>
            <person name="Rajandream M.A."/>
            <person name="Lyne M.H."/>
            <person name="Lyne R."/>
            <person name="Stewart A."/>
            <person name="Sgouros J.G."/>
            <person name="Peat N."/>
            <person name="Hayles J."/>
            <person name="Baker S.G."/>
            <person name="Basham D."/>
            <person name="Bowman S."/>
            <person name="Brooks K."/>
            <person name="Brown D."/>
            <person name="Brown S."/>
            <person name="Chillingworth T."/>
            <person name="Churcher C.M."/>
            <person name="Collins M."/>
            <person name="Connor R."/>
            <person name="Cronin A."/>
            <person name="Davis P."/>
            <person name="Feltwell T."/>
            <person name="Fraser A."/>
            <person name="Gentles S."/>
            <person name="Goble A."/>
            <person name="Hamlin N."/>
            <person name="Harris D.E."/>
            <person name="Hidalgo J."/>
            <person name="Hodgson G."/>
            <person name="Holroyd S."/>
            <person name="Hornsby T."/>
            <person name="Howarth S."/>
            <person name="Huckle E.J."/>
            <person name="Hunt S."/>
            <person name="Jagels K."/>
            <person name="James K.D."/>
            <person name="Jones L."/>
            <person name="Jones M."/>
            <person name="Leather S."/>
            <person name="McDonald S."/>
            <person name="McLean J."/>
            <person name="Mooney P."/>
            <person name="Moule S."/>
            <person name="Mungall K.L."/>
            <person name="Murphy L.D."/>
            <person name="Niblett D."/>
            <person name="Odell C."/>
            <person name="Oliver K."/>
            <person name="O'Neil S."/>
            <person name="Pearson D."/>
            <person name="Quail M.A."/>
            <person name="Rabbinowitsch E."/>
            <person name="Rutherford K.M."/>
            <person name="Rutter S."/>
            <person name="Saunders D."/>
            <person name="Seeger K."/>
            <person name="Sharp S."/>
            <person name="Skelton J."/>
            <person name="Simmonds M.N."/>
            <person name="Squares R."/>
            <person name="Squares S."/>
            <person name="Stevens K."/>
            <person name="Taylor K."/>
            <person name="Taylor R.G."/>
            <person name="Tivey A."/>
            <person name="Walsh S.V."/>
            <person name="Warren T."/>
            <person name="Whitehead S."/>
            <person name="Woodward J.R."/>
            <person name="Volckaert G."/>
            <person name="Aert R."/>
            <person name="Robben J."/>
            <person name="Grymonprez B."/>
            <person name="Weltjens I."/>
            <person name="Vanstreels E."/>
            <person name="Rieger M."/>
            <person name="Schaefer M."/>
            <person name="Mueller-Auer S."/>
            <person name="Gabel C."/>
            <person name="Fuchs M."/>
            <person name="Duesterhoeft A."/>
            <person name="Fritzc C."/>
            <person name="Holzer E."/>
            <person name="Moestl D."/>
            <person name="Hilbert H."/>
            <person name="Borzym K."/>
            <person name="Langer I."/>
            <person name="Beck A."/>
            <person name="Lehrach H."/>
            <person name="Reinhardt R."/>
            <person name="Pohl T.M."/>
            <person name="Eger P."/>
            <person name="Zimmermann W."/>
            <person name="Wedler H."/>
            <person name="Wambutt R."/>
            <person name="Purnelle B."/>
            <person name="Goffeau A."/>
            <person name="Cadieu E."/>
            <person name="Dreano S."/>
            <person name="Gloux S."/>
            <person name="Lelaure V."/>
            <person name="Mottier S."/>
            <person name="Galibert F."/>
            <person name="Aves S.J."/>
            <person name="Xiang Z."/>
            <person name="Hunt C."/>
            <person name="Moore K."/>
            <person name="Hurst S.M."/>
            <person name="Lucas M."/>
            <person name="Rochet M."/>
            <person name="Gaillardin C."/>
            <person name="Tallada V.A."/>
            <person name="Garzon A."/>
            <person name="Thode G."/>
            <person name="Daga R.R."/>
            <person name="Cruzado L."/>
            <person name="Jimenez J."/>
            <person name="Sanchez M."/>
            <person name="del Rey F."/>
            <person name="Benito J."/>
            <person name="Dominguez A."/>
            <person name="Revuelta J.L."/>
            <person name="Moreno S."/>
            <person name="Armstrong J."/>
            <person name="Forsburg S.L."/>
            <person name="Cerutti L."/>
            <person name="Lowe T."/>
            <person name="McCombie W.R."/>
            <person name="Paulsen I."/>
            <person name="Potashkin J."/>
            <person name="Shpakovski G.V."/>
            <person name="Ussery D."/>
            <person name="Barrell B.G."/>
            <person name="Nurse P."/>
        </authorList>
    </citation>
    <scope>NUCLEOTIDE SEQUENCE [LARGE SCALE GENOMIC DNA]</scope>
    <source>
        <strain>972 / ATCC 24843</strain>
    </source>
</reference>
<reference key="3">
    <citation type="journal article" date="2000" name="Mol. Cell">
        <title>Meiotic DNA breaks associated with recombination in S. pombe.</title>
        <authorList>
            <person name="Cervantes M.D."/>
            <person name="Farah J.A."/>
            <person name="Smith G.R."/>
        </authorList>
    </citation>
    <scope>FUNCTION</scope>
</reference>
<reference key="4">
    <citation type="journal article" date="2012" name="Mol. Cell">
        <title>A central coupler for recombination initiation linking chromosome architecture to S phase checkpoint.</title>
        <authorList>
            <person name="Miyoshi T."/>
            <person name="Ito M."/>
            <person name="Kugou K."/>
            <person name="Yamada S."/>
            <person name="Furuichi M."/>
            <person name="Oda A."/>
            <person name="Yamada T."/>
            <person name="Hirota K."/>
            <person name="Masai H."/>
            <person name="Ohta K."/>
        </authorList>
    </citation>
    <scope>IDENTIFICATION IN DSBC COMPLEX</scope>
</reference>
<reference key="5">
    <citation type="journal article" date="2016" name="Science">
        <title>The TopoVIB-Like protein family is required for meiotic DNA double-strand break formation.</title>
        <authorList>
            <person name="Robert T."/>
            <person name="Nore A."/>
            <person name="Brun C."/>
            <person name="Maffre C."/>
            <person name="Crimi B."/>
            <person name="Bourbon H.M."/>
            <person name="de Massy B."/>
        </authorList>
    </citation>
    <scope>REVISION OF GENE MODEL</scope>
</reference>